<sequence>MKDLLKFLKAQTKTEEFDAIKIALASPDMIRSWSFGEVKKPETINYRTFKPERDGLFCARIFGPVKDYECLCGKYKRLKHRGVICEKCGVEVTQTKVRRERMGHIELASPTAHIWFLKSLPSRIGLLLDMPLRDIERVLYFESYVVIEGGMTNLERRQILTEEQYLDALEEFGDEFDAKMGAEAIQALLKNMDLEAECEILREELNETNSETKRKKLTKRIKLLEAFVQSGNKPEWMILTVLPVLPPDLRPLVPLDGGRFATSDLNDLYRRVINRNNRLKRLLDLAAPDIIVRNEKRMLQEAVDALLDNGRRGRAITGSNKRPLKSLADMIKGKQGRFRQNLLGKRVDYSGRSVITVGPYLRLHQCGLPKKMALELFKPFIYGKLELRGLATTIKAAKKMVEREEAVVWDILDEVIREHPVLLNRAPTLHRLGIQAFEPVLIEGKAIQLHPLVCAAYNADFDGDQMAVHVPLTLEAQLEARALMMSTNNILSPANGEPIIVPSQDVVLGLYYMTRDCVNAKGEGMVLTGPKEAERIYRAGLASLHARVKVRITEEIRNTEGESITRTSIIDTTVGRAILWMIVPQGLPYSIVNQPLGKKAISKMLNTCYRILGLKPTVIFADQIMYTGFAYAARSGASVGIDDMVIPEAKAGIIEEAETEVAEIQEQFQSGLVTAGERYNKVIDIWAAANERVAKAMMDNLSVEDVVNRDGVVEQQVSFNSIFMMADSGARGSAAQIRQLAGMRGLMAKPDGSIIETPITANFREGLNVLQYFISTHGARKGLADTALKTANSGYLTRRLVDVAQDLVVTEDDCGTHNGIVMTPVIEGGDVKEPLRDRVLGRVTAEEVIKPGSADILVPRNTLLDEKWCDLLEENSVDSVKVRSVVSCETDFGVCANCYGRDLARGHIINKGEAVGVIAAQSIGEPGTQLTMRTFHIGGAASRAAAESSIQVKNKGSLKLSNVKFVTNAAGKLVITSRNTELKLIDEFGRTKESYKVPYGAVMAKGDGAEVQGGETVANWDPHIMPVVTEVSGFIRFADMVDGQTITRQTDELTGLSSLVVLDSAERTGSGKDLRPALKIVDAKGNDVLIPGTDMPAQYFLPGKAIVQLEDGIQIGAGDTLARIPQESSGTKDITGGLPRVADLFEARRPKEPAILAEISGIISFGKETKGKRRLVISPLDGSDAYEEMIPKWRQLNVFEGEVVERGDVVSDGPESPHDILRLRGVHAVTRYITNEVQEVYRLQGVKINDKHIEVIVRQMLRKGTIVDAGSTDFLEGEQAEMSRVKIANRKLAAEGKIEATFTRDLLGITKASLATESFISAASFQETTRVLTEAAVAGKRDELRGLKENVIVGRLIPAGTGYAYHQDRMRRKAQGEAPVVPQVSADEATANLAELLNAGFGNNKG</sequence>
<comment type="function">
    <text evidence="1">DNA-dependent RNA polymerase catalyzes the transcription of DNA into RNA using the four ribonucleoside triphosphates as substrates.</text>
</comment>
<comment type="catalytic activity">
    <reaction evidence="1">
        <text>RNA(n) + a ribonucleoside 5'-triphosphate = RNA(n+1) + diphosphate</text>
        <dbReference type="Rhea" id="RHEA:21248"/>
        <dbReference type="Rhea" id="RHEA-COMP:14527"/>
        <dbReference type="Rhea" id="RHEA-COMP:17342"/>
        <dbReference type="ChEBI" id="CHEBI:33019"/>
        <dbReference type="ChEBI" id="CHEBI:61557"/>
        <dbReference type="ChEBI" id="CHEBI:140395"/>
        <dbReference type="EC" id="2.7.7.6"/>
    </reaction>
</comment>
<comment type="cofactor">
    <cofactor evidence="1">
        <name>Mg(2+)</name>
        <dbReference type="ChEBI" id="CHEBI:18420"/>
    </cofactor>
    <text evidence="1">Binds 1 Mg(2+) ion per subunit.</text>
</comment>
<comment type="cofactor">
    <cofactor evidence="1">
        <name>Zn(2+)</name>
        <dbReference type="ChEBI" id="CHEBI:29105"/>
    </cofactor>
    <text evidence="1">Binds 2 Zn(2+) ions per subunit.</text>
</comment>
<comment type="subunit">
    <text evidence="1">The RNAP catalytic core consists of 2 alpha, 1 beta, 1 beta' and 1 omega subunit. When a sigma factor is associated with the core the holoenzyme is formed, which can initiate transcription.</text>
</comment>
<comment type="similarity">
    <text evidence="1">Belongs to the RNA polymerase beta' chain family.</text>
</comment>
<evidence type="ECO:0000255" key="1">
    <source>
        <dbReference type="HAMAP-Rule" id="MF_01322"/>
    </source>
</evidence>
<reference key="1">
    <citation type="journal article" date="2004" name="Proc. Natl. Acad. Sci. U.S.A.">
        <title>Insights into the evolution of Yersinia pestis through whole-genome comparison with Yersinia pseudotuberculosis.</title>
        <authorList>
            <person name="Chain P.S.G."/>
            <person name="Carniel E."/>
            <person name="Larimer F.W."/>
            <person name="Lamerdin J."/>
            <person name="Stoutland P.O."/>
            <person name="Regala W.M."/>
            <person name="Georgescu A.M."/>
            <person name="Vergez L.M."/>
            <person name="Land M.L."/>
            <person name="Motin V.L."/>
            <person name="Brubaker R.R."/>
            <person name="Fowler J."/>
            <person name="Hinnebusch J."/>
            <person name="Marceau M."/>
            <person name="Medigue C."/>
            <person name="Simonet M."/>
            <person name="Chenal-Francisque V."/>
            <person name="Souza B."/>
            <person name="Dacheux D."/>
            <person name="Elliott J.M."/>
            <person name="Derbise A."/>
            <person name="Hauser L.J."/>
            <person name="Garcia E."/>
        </authorList>
    </citation>
    <scope>NUCLEOTIDE SEQUENCE [LARGE SCALE GENOMIC DNA]</scope>
    <source>
        <strain>IP32953</strain>
    </source>
</reference>
<organism>
    <name type="scientific">Yersinia pseudotuberculosis serotype I (strain IP32953)</name>
    <dbReference type="NCBI Taxonomy" id="273123"/>
    <lineage>
        <taxon>Bacteria</taxon>
        <taxon>Pseudomonadati</taxon>
        <taxon>Pseudomonadota</taxon>
        <taxon>Gammaproteobacteria</taxon>
        <taxon>Enterobacterales</taxon>
        <taxon>Yersiniaceae</taxon>
        <taxon>Yersinia</taxon>
    </lineage>
</organism>
<keyword id="KW-0240">DNA-directed RNA polymerase</keyword>
<keyword id="KW-0460">Magnesium</keyword>
<keyword id="KW-0479">Metal-binding</keyword>
<keyword id="KW-0548">Nucleotidyltransferase</keyword>
<keyword id="KW-0804">Transcription</keyword>
<keyword id="KW-0808">Transferase</keyword>
<keyword id="KW-0862">Zinc</keyword>
<protein>
    <recommendedName>
        <fullName evidence="1">DNA-directed RNA polymerase subunit beta'</fullName>
        <shortName evidence="1">RNAP subunit beta'</shortName>
        <ecNumber evidence="1">2.7.7.6</ecNumber>
    </recommendedName>
    <alternativeName>
        <fullName evidence="1">RNA polymerase subunit beta'</fullName>
    </alternativeName>
    <alternativeName>
        <fullName evidence="1">Transcriptase subunit beta'</fullName>
    </alternativeName>
</protein>
<name>RPOC_YERPS</name>
<dbReference type="EC" id="2.7.7.6" evidence="1"/>
<dbReference type="EMBL" id="BX936398">
    <property type="protein sequence ID" value="CAH19524.1"/>
    <property type="molecule type" value="Genomic_DNA"/>
</dbReference>
<dbReference type="RefSeq" id="WP_002210677.1">
    <property type="nucleotide sequence ID" value="NZ_CP009712.1"/>
</dbReference>
<dbReference type="SMR" id="Q66FQ1"/>
<dbReference type="GeneID" id="96663777"/>
<dbReference type="KEGG" id="ypo:BZ17_2289"/>
<dbReference type="KEGG" id="yps:YPTB0284"/>
<dbReference type="PATRIC" id="fig|273123.14.peg.2421"/>
<dbReference type="Proteomes" id="UP000001011">
    <property type="component" value="Chromosome"/>
</dbReference>
<dbReference type="GO" id="GO:0000428">
    <property type="term" value="C:DNA-directed RNA polymerase complex"/>
    <property type="evidence" value="ECO:0007669"/>
    <property type="project" value="UniProtKB-KW"/>
</dbReference>
<dbReference type="GO" id="GO:0003677">
    <property type="term" value="F:DNA binding"/>
    <property type="evidence" value="ECO:0007669"/>
    <property type="project" value="UniProtKB-UniRule"/>
</dbReference>
<dbReference type="GO" id="GO:0003899">
    <property type="term" value="F:DNA-directed RNA polymerase activity"/>
    <property type="evidence" value="ECO:0007669"/>
    <property type="project" value="UniProtKB-UniRule"/>
</dbReference>
<dbReference type="GO" id="GO:0000287">
    <property type="term" value="F:magnesium ion binding"/>
    <property type="evidence" value="ECO:0007669"/>
    <property type="project" value="UniProtKB-UniRule"/>
</dbReference>
<dbReference type="GO" id="GO:0008270">
    <property type="term" value="F:zinc ion binding"/>
    <property type="evidence" value="ECO:0007669"/>
    <property type="project" value="UniProtKB-UniRule"/>
</dbReference>
<dbReference type="GO" id="GO:0006351">
    <property type="term" value="P:DNA-templated transcription"/>
    <property type="evidence" value="ECO:0007669"/>
    <property type="project" value="UniProtKB-UniRule"/>
</dbReference>
<dbReference type="CDD" id="cd02655">
    <property type="entry name" value="RNAP_beta'_C"/>
    <property type="match status" value="1"/>
</dbReference>
<dbReference type="CDD" id="cd01609">
    <property type="entry name" value="RNAP_beta'_N"/>
    <property type="match status" value="1"/>
</dbReference>
<dbReference type="FunFam" id="1.10.132.30:FF:000003">
    <property type="entry name" value="DNA-directed RNA polymerase subunit beta"/>
    <property type="match status" value="1"/>
</dbReference>
<dbReference type="FunFam" id="1.10.150.390:FF:000002">
    <property type="entry name" value="DNA-directed RNA polymerase subunit beta"/>
    <property type="match status" value="1"/>
</dbReference>
<dbReference type="FunFam" id="1.10.274.100:FF:000002">
    <property type="entry name" value="DNA-directed RNA polymerase subunit beta"/>
    <property type="match status" value="1"/>
</dbReference>
<dbReference type="FunFam" id="1.10.40.90:FF:000001">
    <property type="entry name" value="DNA-directed RNA polymerase subunit beta"/>
    <property type="match status" value="1"/>
</dbReference>
<dbReference type="FunFam" id="2.40.50.100:FF:000012">
    <property type="entry name" value="DNA-directed RNA polymerase subunit beta"/>
    <property type="match status" value="1"/>
</dbReference>
<dbReference type="FunFam" id="2.40.50.100:FF:000016">
    <property type="entry name" value="DNA-directed RNA polymerase subunit beta"/>
    <property type="match status" value="1"/>
</dbReference>
<dbReference type="FunFam" id="2.40.50.100:FF:000019">
    <property type="entry name" value="DNA-directed RNA polymerase subunit beta"/>
    <property type="match status" value="1"/>
</dbReference>
<dbReference type="FunFam" id="4.10.860.120:FF:000001">
    <property type="entry name" value="DNA-directed RNA polymerase subunit beta"/>
    <property type="match status" value="1"/>
</dbReference>
<dbReference type="Gene3D" id="1.10.132.30">
    <property type="match status" value="1"/>
</dbReference>
<dbReference type="Gene3D" id="1.10.150.390">
    <property type="match status" value="1"/>
</dbReference>
<dbReference type="Gene3D" id="1.10.1790.20">
    <property type="match status" value="1"/>
</dbReference>
<dbReference type="Gene3D" id="1.10.40.90">
    <property type="match status" value="1"/>
</dbReference>
<dbReference type="Gene3D" id="2.40.40.20">
    <property type="match status" value="1"/>
</dbReference>
<dbReference type="Gene3D" id="2.40.50.100">
    <property type="match status" value="3"/>
</dbReference>
<dbReference type="Gene3D" id="4.10.860.120">
    <property type="entry name" value="RNA polymerase II, clamp domain"/>
    <property type="match status" value="1"/>
</dbReference>
<dbReference type="Gene3D" id="1.10.274.100">
    <property type="entry name" value="RNA polymerase Rpb1, domain 3"/>
    <property type="match status" value="1"/>
</dbReference>
<dbReference type="HAMAP" id="MF_01322">
    <property type="entry name" value="RNApol_bact_RpoC"/>
    <property type="match status" value="1"/>
</dbReference>
<dbReference type="InterPro" id="IPR045867">
    <property type="entry name" value="DNA-dir_RpoC_beta_prime"/>
</dbReference>
<dbReference type="InterPro" id="IPR012754">
    <property type="entry name" value="DNA-dir_RpoC_beta_prime_bact"/>
</dbReference>
<dbReference type="InterPro" id="IPR000722">
    <property type="entry name" value="RNA_pol_asu"/>
</dbReference>
<dbReference type="InterPro" id="IPR006592">
    <property type="entry name" value="RNA_pol_N"/>
</dbReference>
<dbReference type="InterPro" id="IPR007080">
    <property type="entry name" value="RNA_pol_Rpb1_1"/>
</dbReference>
<dbReference type="InterPro" id="IPR007066">
    <property type="entry name" value="RNA_pol_Rpb1_3"/>
</dbReference>
<dbReference type="InterPro" id="IPR042102">
    <property type="entry name" value="RNA_pol_Rpb1_3_sf"/>
</dbReference>
<dbReference type="InterPro" id="IPR007083">
    <property type="entry name" value="RNA_pol_Rpb1_4"/>
</dbReference>
<dbReference type="InterPro" id="IPR007081">
    <property type="entry name" value="RNA_pol_Rpb1_5"/>
</dbReference>
<dbReference type="InterPro" id="IPR044893">
    <property type="entry name" value="RNA_pol_Rpb1_clamp_domain"/>
</dbReference>
<dbReference type="InterPro" id="IPR038120">
    <property type="entry name" value="Rpb1_funnel_sf"/>
</dbReference>
<dbReference type="NCBIfam" id="TIGR02386">
    <property type="entry name" value="rpoC_TIGR"/>
    <property type="match status" value="1"/>
</dbReference>
<dbReference type="PANTHER" id="PTHR19376">
    <property type="entry name" value="DNA-DIRECTED RNA POLYMERASE"/>
    <property type="match status" value="1"/>
</dbReference>
<dbReference type="PANTHER" id="PTHR19376:SF54">
    <property type="entry name" value="DNA-DIRECTED RNA POLYMERASE SUBUNIT BETA"/>
    <property type="match status" value="1"/>
</dbReference>
<dbReference type="Pfam" id="PF04997">
    <property type="entry name" value="RNA_pol_Rpb1_1"/>
    <property type="match status" value="1"/>
</dbReference>
<dbReference type="Pfam" id="PF00623">
    <property type="entry name" value="RNA_pol_Rpb1_2"/>
    <property type="match status" value="2"/>
</dbReference>
<dbReference type="Pfam" id="PF04983">
    <property type="entry name" value="RNA_pol_Rpb1_3"/>
    <property type="match status" value="1"/>
</dbReference>
<dbReference type="Pfam" id="PF05000">
    <property type="entry name" value="RNA_pol_Rpb1_4"/>
    <property type="match status" value="1"/>
</dbReference>
<dbReference type="Pfam" id="PF04998">
    <property type="entry name" value="RNA_pol_Rpb1_5"/>
    <property type="match status" value="1"/>
</dbReference>
<dbReference type="SMART" id="SM00663">
    <property type="entry name" value="RPOLA_N"/>
    <property type="match status" value="1"/>
</dbReference>
<dbReference type="SUPFAM" id="SSF64484">
    <property type="entry name" value="beta and beta-prime subunits of DNA dependent RNA-polymerase"/>
    <property type="match status" value="1"/>
</dbReference>
<proteinExistence type="inferred from homology"/>
<accession>Q66FQ1</accession>
<feature type="chain" id="PRO_0000225588" description="DNA-directed RNA polymerase subunit beta'">
    <location>
        <begin position="1"/>
        <end position="1406"/>
    </location>
</feature>
<feature type="binding site" evidence="1">
    <location>
        <position position="70"/>
    </location>
    <ligand>
        <name>Zn(2+)</name>
        <dbReference type="ChEBI" id="CHEBI:29105"/>
        <label>1</label>
    </ligand>
</feature>
<feature type="binding site" evidence="1">
    <location>
        <position position="72"/>
    </location>
    <ligand>
        <name>Zn(2+)</name>
        <dbReference type="ChEBI" id="CHEBI:29105"/>
        <label>1</label>
    </ligand>
</feature>
<feature type="binding site" evidence="1">
    <location>
        <position position="85"/>
    </location>
    <ligand>
        <name>Zn(2+)</name>
        <dbReference type="ChEBI" id="CHEBI:29105"/>
        <label>1</label>
    </ligand>
</feature>
<feature type="binding site" evidence="1">
    <location>
        <position position="88"/>
    </location>
    <ligand>
        <name>Zn(2+)</name>
        <dbReference type="ChEBI" id="CHEBI:29105"/>
        <label>1</label>
    </ligand>
</feature>
<feature type="binding site" evidence="1">
    <location>
        <position position="460"/>
    </location>
    <ligand>
        <name>Mg(2+)</name>
        <dbReference type="ChEBI" id="CHEBI:18420"/>
    </ligand>
</feature>
<feature type="binding site" evidence="1">
    <location>
        <position position="462"/>
    </location>
    <ligand>
        <name>Mg(2+)</name>
        <dbReference type="ChEBI" id="CHEBI:18420"/>
    </ligand>
</feature>
<feature type="binding site" evidence="1">
    <location>
        <position position="464"/>
    </location>
    <ligand>
        <name>Mg(2+)</name>
        <dbReference type="ChEBI" id="CHEBI:18420"/>
    </ligand>
</feature>
<feature type="binding site" evidence="1">
    <location>
        <position position="814"/>
    </location>
    <ligand>
        <name>Zn(2+)</name>
        <dbReference type="ChEBI" id="CHEBI:29105"/>
        <label>2</label>
    </ligand>
</feature>
<feature type="binding site" evidence="1">
    <location>
        <position position="888"/>
    </location>
    <ligand>
        <name>Zn(2+)</name>
        <dbReference type="ChEBI" id="CHEBI:29105"/>
        <label>2</label>
    </ligand>
</feature>
<feature type="binding site" evidence="1">
    <location>
        <position position="895"/>
    </location>
    <ligand>
        <name>Zn(2+)</name>
        <dbReference type="ChEBI" id="CHEBI:29105"/>
        <label>2</label>
    </ligand>
</feature>
<feature type="binding site" evidence="1">
    <location>
        <position position="898"/>
    </location>
    <ligand>
        <name>Zn(2+)</name>
        <dbReference type="ChEBI" id="CHEBI:29105"/>
        <label>2</label>
    </ligand>
</feature>
<gene>
    <name evidence="1" type="primary">rpoC</name>
    <name type="ordered locus">YPTB0284</name>
</gene>